<feature type="chain" id="PRO_0000132639" description="Small ribosomal subunit protein uS4c">
    <location>
        <begin position="1"/>
        <end position="203"/>
    </location>
</feature>
<feature type="domain" description="S4 RNA-binding">
    <location>
        <begin position="89"/>
        <end position="150"/>
    </location>
</feature>
<feature type="region of interest" description="Disordered" evidence="2">
    <location>
        <begin position="15"/>
        <end position="42"/>
    </location>
</feature>
<accession>Q9MTP1</accession>
<organism>
    <name type="scientific">Oenothera elata subsp. hookeri</name>
    <name type="common">Hooker's evening primrose</name>
    <name type="synonym">Oenothera hookeri</name>
    <dbReference type="NCBI Taxonomy" id="85636"/>
    <lineage>
        <taxon>Eukaryota</taxon>
        <taxon>Viridiplantae</taxon>
        <taxon>Streptophyta</taxon>
        <taxon>Embryophyta</taxon>
        <taxon>Tracheophyta</taxon>
        <taxon>Spermatophyta</taxon>
        <taxon>Magnoliopsida</taxon>
        <taxon>eudicotyledons</taxon>
        <taxon>Gunneridae</taxon>
        <taxon>Pentapetalae</taxon>
        <taxon>rosids</taxon>
        <taxon>malvids</taxon>
        <taxon>Myrtales</taxon>
        <taxon>Onagraceae</taxon>
        <taxon>Onagroideae</taxon>
        <taxon>Onagreae</taxon>
        <taxon>Oenothera</taxon>
    </lineage>
</organism>
<dbReference type="EMBL" id="AJ271079">
    <property type="protein sequence ID" value="CAB67134.2"/>
    <property type="molecule type" value="Genomic_DNA"/>
</dbReference>
<dbReference type="RefSeq" id="NP_084669.2">
    <property type="nucleotide sequence ID" value="NC_002693.2"/>
</dbReference>
<dbReference type="SMR" id="Q9MTP1"/>
<dbReference type="GeneID" id="802704"/>
<dbReference type="GO" id="GO:0009507">
    <property type="term" value="C:chloroplast"/>
    <property type="evidence" value="ECO:0007669"/>
    <property type="project" value="UniProtKB-SubCell"/>
</dbReference>
<dbReference type="GO" id="GO:0015935">
    <property type="term" value="C:small ribosomal subunit"/>
    <property type="evidence" value="ECO:0007669"/>
    <property type="project" value="InterPro"/>
</dbReference>
<dbReference type="GO" id="GO:0019843">
    <property type="term" value="F:rRNA binding"/>
    <property type="evidence" value="ECO:0007669"/>
    <property type="project" value="UniProtKB-UniRule"/>
</dbReference>
<dbReference type="GO" id="GO:0003735">
    <property type="term" value="F:structural constituent of ribosome"/>
    <property type="evidence" value="ECO:0007669"/>
    <property type="project" value="InterPro"/>
</dbReference>
<dbReference type="GO" id="GO:0042274">
    <property type="term" value="P:ribosomal small subunit biogenesis"/>
    <property type="evidence" value="ECO:0007669"/>
    <property type="project" value="TreeGrafter"/>
</dbReference>
<dbReference type="GO" id="GO:0006412">
    <property type="term" value="P:translation"/>
    <property type="evidence" value="ECO:0007669"/>
    <property type="project" value="UniProtKB-UniRule"/>
</dbReference>
<dbReference type="CDD" id="cd00165">
    <property type="entry name" value="S4"/>
    <property type="match status" value="1"/>
</dbReference>
<dbReference type="FunFam" id="1.10.1050.10:FF:000002">
    <property type="entry name" value="30S ribosomal protein S4, chloroplastic"/>
    <property type="match status" value="1"/>
</dbReference>
<dbReference type="FunFam" id="3.10.290.10:FF:000081">
    <property type="entry name" value="30S ribosomal protein S4, chloroplastic"/>
    <property type="match status" value="1"/>
</dbReference>
<dbReference type="Gene3D" id="1.10.1050.10">
    <property type="entry name" value="Ribosomal Protein S4 Delta 41, Chain A, domain 1"/>
    <property type="match status" value="1"/>
</dbReference>
<dbReference type="Gene3D" id="3.10.290.10">
    <property type="entry name" value="RNA-binding S4 domain"/>
    <property type="match status" value="1"/>
</dbReference>
<dbReference type="HAMAP" id="MF_01306_B">
    <property type="entry name" value="Ribosomal_uS4_B"/>
    <property type="match status" value="1"/>
</dbReference>
<dbReference type="InterPro" id="IPR022801">
    <property type="entry name" value="Ribosomal_uS4"/>
</dbReference>
<dbReference type="InterPro" id="IPR005709">
    <property type="entry name" value="Ribosomal_uS4_bac-type"/>
</dbReference>
<dbReference type="InterPro" id="IPR018079">
    <property type="entry name" value="Ribosomal_uS4_CS"/>
</dbReference>
<dbReference type="InterPro" id="IPR001912">
    <property type="entry name" value="Ribosomal_uS4_N"/>
</dbReference>
<dbReference type="InterPro" id="IPR002942">
    <property type="entry name" value="S4_RNA-bd"/>
</dbReference>
<dbReference type="InterPro" id="IPR036986">
    <property type="entry name" value="S4_RNA-bd_sf"/>
</dbReference>
<dbReference type="NCBIfam" id="NF003717">
    <property type="entry name" value="PRK05327.1"/>
    <property type="match status" value="1"/>
</dbReference>
<dbReference type="NCBIfam" id="TIGR01017">
    <property type="entry name" value="rpsD_bact"/>
    <property type="match status" value="1"/>
</dbReference>
<dbReference type="PANTHER" id="PTHR11831">
    <property type="entry name" value="30S 40S RIBOSOMAL PROTEIN"/>
    <property type="match status" value="1"/>
</dbReference>
<dbReference type="PANTHER" id="PTHR11831:SF4">
    <property type="entry name" value="SMALL RIBOSOMAL SUBUNIT PROTEIN US4M"/>
    <property type="match status" value="1"/>
</dbReference>
<dbReference type="Pfam" id="PF00163">
    <property type="entry name" value="Ribosomal_S4"/>
    <property type="match status" value="1"/>
</dbReference>
<dbReference type="Pfam" id="PF01479">
    <property type="entry name" value="S4"/>
    <property type="match status" value="1"/>
</dbReference>
<dbReference type="SMART" id="SM01390">
    <property type="entry name" value="Ribosomal_S4"/>
    <property type="match status" value="1"/>
</dbReference>
<dbReference type="SMART" id="SM00363">
    <property type="entry name" value="S4"/>
    <property type="match status" value="1"/>
</dbReference>
<dbReference type="SUPFAM" id="SSF55174">
    <property type="entry name" value="Alpha-L RNA-binding motif"/>
    <property type="match status" value="1"/>
</dbReference>
<dbReference type="PROSITE" id="PS00632">
    <property type="entry name" value="RIBOSOMAL_S4"/>
    <property type="match status" value="1"/>
</dbReference>
<dbReference type="PROSITE" id="PS50889">
    <property type="entry name" value="S4"/>
    <property type="match status" value="1"/>
</dbReference>
<gene>
    <name type="primary">rps4</name>
</gene>
<evidence type="ECO:0000250" key="1"/>
<evidence type="ECO:0000256" key="2">
    <source>
        <dbReference type="SAM" id="MobiDB-lite"/>
    </source>
</evidence>
<evidence type="ECO:0000305" key="3"/>
<name>RR4_OENEH</name>
<comment type="function">
    <text evidence="1">One of the primary rRNA binding proteins, it binds directly to 16S rRNA where it nucleates assembly of the body of the 30S subunit.</text>
</comment>
<comment type="function">
    <text evidence="1">With S5 and S12 plays an important role in translational accuracy.</text>
</comment>
<comment type="subunit">
    <text evidence="1">Part of the 30S ribosomal subunit. Contacts protein S5. The interaction surface between S4 and S5 is involved in control of translational fidelity (By similarity).</text>
</comment>
<comment type="subcellular location">
    <subcellularLocation>
        <location>Plastid</location>
        <location>Chloroplast</location>
    </subcellularLocation>
</comment>
<comment type="similarity">
    <text evidence="3">Belongs to the universal ribosomal protein uS4 family.</text>
</comment>
<reference key="1">
    <citation type="journal article" date="2000" name="Mol. Gen. Genet.">
        <title>Complete nucleotide sequence of the Oenothera elata plastid chromosome, representing plastome I of the five distinguishable Euoenothera plastomes.</title>
        <authorList>
            <person name="Hupfer H."/>
            <person name="Swiatek M."/>
            <person name="Hornung S."/>
            <person name="Herrmann R.G."/>
            <person name="Maier R.M."/>
            <person name="Chiu W.-L."/>
            <person name="Sears B."/>
        </authorList>
    </citation>
    <scope>NUCLEOTIDE SEQUENCE [LARGE SCALE GENOMIC DNA]</scope>
    <source>
        <strain>cv. Johansen</strain>
    </source>
</reference>
<reference key="2">
    <citation type="journal article" date="2008" name="Nucleic Acids Res.">
        <title>The complete nucleotide sequences of the five genetically distinct plastid genomes of Oenothera, subsection Oenothera: I. Sequence evaluation and plastome evolution.</title>
        <authorList>
            <person name="Greiner S."/>
            <person name="Wang X."/>
            <person name="Rauwolf U."/>
            <person name="Silber M.V."/>
            <person name="Mayer K."/>
            <person name="Meurer J."/>
            <person name="Haberer G."/>
            <person name="Herrmann R.G."/>
        </authorList>
    </citation>
    <scope>SEQUENCE REVISION TO 33-36</scope>
</reference>
<sequence length="203" mass="23580">MSRYRGPRFKKIRRLGALPGLTSKRPRAGSDPRNQELSGNKSQYRIRLEEKQKLRFHYGLTERQLLKYVRIAGKAKGPTGQVLLQLLEMRLDNILFRLGMASTIPQARQLVNHRHILVNGRIVDIPSYRCKPRDIITAKDDQKSKAMIQNSLESPPHEEVPKHLTFHPFQYKGLVNQIIDSEWVGLKINELLVVEYYSRQTKT</sequence>
<protein>
    <recommendedName>
        <fullName evidence="3">Small ribosomal subunit protein uS4c</fullName>
    </recommendedName>
    <alternativeName>
        <fullName>30S ribosomal protein S4, chloroplastic</fullName>
    </alternativeName>
</protein>
<keyword id="KW-0150">Chloroplast</keyword>
<keyword id="KW-0934">Plastid</keyword>
<keyword id="KW-0687">Ribonucleoprotein</keyword>
<keyword id="KW-0689">Ribosomal protein</keyword>
<keyword id="KW-0694">RNA-binding</keyword>
<keyword id="KW-0699">rRNA-binding</keyword>
<proteinExistence type="inferred from homology"/>
<geneLocation type="chloroplast"/>